<accession>Q82HE8</accession>
<proteinExistence type="inferred from homology"/>
<protein>
    <recommendedName>
        <fullName evidence="1">Bifunctional protein GlmU</fullName>
    </recommendedName>
    <domain>
        <recommendedName>
            <fullName evidence="1">UDP-N-acetylglucosamine pyrophosphorylase</fullName>
            <ecNumber evidence="1">2.7.7.23</ecNumber>
        </recommendedName>
        <alternativeName>
            <fullName evidence="1">N-acetylglucosamine-1-phosphate uridyltransferase</fullName>
        </alternativeName>
    </domain>
    <domain>
        <recommendedName>
            <fullName evidence="1">Glucosamine-1-phosphate N-acetyltransferase</fullName>
            <ecNumber evidence="1">2.3.1.157</ecNumber>
        </recommendedName>
    </domain>
</protein>
<reference key="1">
    <citation type="journal article" date="2001" name="Proc. Natl. Acad. Sci. U.S.A.">
        <title>Genome sequence of an industrial microorganism Streptomyces avermitilis: deducing the ability of producing secondary metabolites.</title>
        <authorList>
            <person name="Omura S."/>
            <person name="Ikeda H."/>
            <person name="Ishikawa J."/>
            <person name="Hanamoto A."/>
            <person name="Takahashi C."/>
            <person name="Shinose M."/>
            <person name="Takahashi Y."/>
            <person name="Horikawa H."/>
            <person name="Nakazawa H."/>
            <person name="Osonoe T."/>
            <person name="Kikuchi H."/>
            <person name="Shiba T."/>
            <person name="Sakaki Y."/>
            <person name="Hattori M."/>
        </authorList>
    </citation>
    <scope>NUCLEOTIDE SEQUENCE [LARGE SCALE GENOMIC DNA]</scope>
    <source>
        <strain>ATCC 31267 / DSM 46492 / JCM 5070 / NBRC 14893 / NCIMB 12804 / NRRL 8165 / MA-4680</strain>
    </source>
</reference>
<reference key="2">
    <citation type="journal article" date="2003" name="Nat. Biotechnol.">
        <title>Complete genome sequence and comparative analysis of the industrial microorganism Streptomyces avermitilis.</title>
        <authorList>
            <person name="Ikeda H."/>
            <person name="Ishikawa J."/>
            <person name="Hanamoto A."/>
            <person name="Shinose M."/>
            <person name="Kikuchi H."/>
            <person name="Shiba T."/>
            <person name="Sakaki Y."/>
            <person name="Hattori M."/>
            <person name="Omura S."/>
        </authorList>
    </citation>
    <scope>NUCLEOTIDE SEQUENCE [LARGE SCALE GENOMIC DNA]</scope>
    <source>
        <strain>ATCC 31267 / DSM 46492 / JCM 5070 / NBRC 14893 / NCIMB 12804 / NRRL 8165 / MA-4680</strain>
    </source>
</reference>
<comment type="function">
    <text evidence="1">Catalyzes the last two sequential reactions in the de novo biosynthetic pathway for UDP-N-acetylglucosamine (UDP-GlcNAc). The C-terminal domain catalyzes the transfer of acetyl group from acetyl coenzyme A to glucosamine-1-phosphate (GlcN-1-P) to produce N-acetylglucosamine-1-phosphate (GlcNAc-1-P), which is converted into UDP-GlcNAc by the transfer of uridine 5-monophosphate (from uridine 5-triphosphate), a reaction catalyzed by the N-terminal domain.</text>
</comment>
<comment type="catalytic activity">
    <reaction evidence="1">
        <text>alpha-D-glucosamine 1-phosphate + acetyl-CoA = N-acetyl-alpha-D-glucosamine 1-phosphate + CoA + H(+)</text>
        <dbReference type="Rhea" id="RHEA:13725"/>
        <dbReference type="ChEBI" id="CHEBI:15378"/>
        <dbReference type="ChEBI" id="CHEBI:57287"/>
        <dbReference type="ChEBI" id="CHEBI:57288"/>
        <dbReference type="ChEBI" id="CHEBI:57776"/>
        <dbReference type="ChEBI" id="CHEBI:58516"/>
        <dbReference type="EC" id="2.3.1.157"/>
    </reaction>
</comment>
<comment type="catalytic activity">
    <reaction evidence="1">
        <text>N-acetyl-alpha-D-glucosamine 1-phosphate + UTP + H(+) = UDP-N-acetyl-alpha-D-glucosamine + diphosphate</text>
        <dbReference type="Rhea" id="RHEA:13509"/>
        <dbReference type="ChEBI" id="CHEBI:15378"/>
        <dbReference type="ChEBI" id="CHEBI:33019"/>
        <dbReference type="ChEBI" id="CHEBI:46398"/>
        <dbReference type="ChEBI" id="CHEBI:57705"/>
        <dbReference type="ChEBI" id="CHEBI:57776"/>
        <dbReference type="EC" id="2.7.7.23"/>
    </reaction>
</comment>
<comment type="cofactor">
    <cofactor evidence="1">
        <name>Mg(2+)</name>
        <dbReference type="ChEBI" id="CHEBI:18420"/>
    </cofactor>
    <text evidence="1">Binds 1 Mg(2+) ion per subunit.</text>
</comment>
<comment type="pathway">
    <text evidence="1">Nucleotide-sugar biosynthesis; UDP-N-acetyl-alpha-D-glucosamine biosynthesis; N-acetyl-alpha-D-glucosamine 1-phosphate from alpha-D-glucosamine 6-phosphate (route II): step 2/2.</text>
</comment>
<comment type="pathway">
    <text evidence="1">Nucleotide-sugar biosynthesis; UDP-N-acetyl-alpha-D-glucosamine biosynthesis; UDP-N-acetyl-alpha-D-glucosamine from N-acetyl-alpha-D-glucosamine 1-phosphate: step 1/1.</text>
</comment>
<comment type="pathway">
    <text evidence="1">Bacterial outer membrane biogenesis; LPS lipid A biosynthesis.</text>
</comment>
<comment type="subunit">
    <text evidence="1">Homotrimer.</text>
</comment>
<comment type="subcellular location">
    <subcellularLocation>
        <location evidence="1">Cytoplasm</location>
    </subcellularLocation>
</comment>
<comment type="similarity">
    <text evidence="1">In the N-terminal section; belongs to the N-acetylglucosamine-1-phosphate uridyltransferase family.</text>
</comment>
<comment type="similarity">
    <text evidence="1">In the C-terminal section; belongs to the transferase hexapeptide repeat family.</text>
</comment>
<keyword id="KW-0012">Acyltransferase</keyword>
<keyword id="KW-0133">Cell shape</keyword>
<keyword id="KW-0961">Cell wall biogenesis/degradation</keyword>
<keyword id="KW-0963">Cytoplasm</keyword>
<keyword id="KW-0460">Magnesium</keyword>
<keyword id="KW-0479">Metal-binding</keyword>
<keyword id="KW-0511">Multifunctional enzyme</keyword>
<keyword id="KW-0548">Nucleotidyltransferase</keyword>
<keyword id="KW-0573">Peptidoglycan synthesis</keyword>
<keyword id="KW-1185">Reference proteome</keyword>
<keyword id="KW-0677">Repeat</keyword>
<keyword id="KW-0808">Transferase</keyword>
<evidence type="ECO:0000255" key="1">
    <source>
        <dbReference type="HAMAP-Rule" id="MF_01631"/>
    </source>
</evidence>
<name>GLMU_STRAW</name>
<gene>
    <name evidence="1" type="primary">glmU</name>
    <name type="ordered locus">SAV_3561</name>
</gene>
<feature type="chain" id="PRO_0000233859" description="Bifunctional protein GlmU">
    <location>
        <begin position="1"/>
        <end position="482"/>
    </location>
</feature>
<feature type="region of interest" description="Pyrophosphorylase" evidence="1">
    <location>
        <begin position="1"/>
        <end position="238"/>
    </location>
</feature>
<feature type="region of interest" description="Linker" evidence="1">
    <location>
        <begin position="239"/>
        <end position="259"/>
    </location>
</feature>
<feature type="region of interest" description="N-acetyltransferase" evidence="1">
    <location>
        <begin position="260"/>
        <end position="482"/>
    </location>
</feature>
<feature type="active site" description="Proton acceptor" evidence="1">
    <location>
        <position position="371"/>
    </location>
</feature>
<feature type="binding site" evidence="1">
    <location>
        <begin position="12"/>
        <end position="15"/>
    </location>
    <ligand>
        <name>UDP-N-acetyl-alpha-D-glucosamine</name>
        <dbReference type="ChEBI" id="CHEBI:57705"/>
    </ligand>
</feature>
<feature type="binding site" evidence="1">
    <location>
        <position position="26"/>
    </location>
    <ligand>
        <name>UDP-N-acetyl-alpha-D-glucosamine</name>
        <dbReference type="ChEBI" id="CHEBI:57705"/>
    </ligand>
</feature>
<feature type="binding site" evidence="1">
    <location>
        <position position="79"/>
    </location>
    <ligand>
        <name>UDP-N-acetyl-alpha-D-glucosamine</name>
        <dbReference type="ChEBI" id="CHEBI:57705"/>
    </ligand>
</feature>
<feature type="binding site" evidence="1">
    <location>
        <begin position="84"/>
        <end position="85"/>
    </location>
    <ligand>
        <name>UDP-N-acetyl-alpha-D-glucosamine</name>
        <dbReference type="ChEBI" id="CHEBI:57705"/>
    </ligand>
</feature>
<feature type="binding site" evidence="1">
    <location>
        <position position="110"/>
    </location>
    <ligand>
        <name>Mg(2+)</name>
        <dbReference type="ChEBI" id="CHEBI:18420"/>
    </ligand>
</feature>
<feature type="binding site" evidence="1">
    <location>
        <position position="147"/>
    </location>
    <ligand>
        <name>UDP-N-acetyl-alpha-D-glucosamine</name>
        <dbReference type="ChEBI" id="CHEBI:57705"/>
    </ligand>
</feature>
<feature type="binding site" evidence="1">
    <location>
        <position position="163"/>
    </location>
    <ligand>
        <name>UDP-N-acetyl-alpha-D-glucosamine</name>
        <dbReference type="ChEBI" id="CHEBI:57705"/>
    </ligand>
</feature>
<feature type="binding site" evidence="1">
    <location>
        <position position="178"/>
    </location>
    <ligand>
        <name>UDP-N-acetyl-alpha-D-glucosamine</name>
        <dbReference type="ChEBI" id="CHEBI:57705"/>
    </ligand>
</feature>
<feature type="binding site" evidence="1">
    <location>
        <position position="236"/>
    </location>
    <ligand>
        <name>Mg(2+)</name>
        <dbReference type="ChEBI" id="CHEBI:18420"/>
    </ligand>
</feature>
<feature type="binding site" evidence="1">
    <location>
        <position position="236"/>
    </location>
    <ligand>
        <name>UDP-N-acetyl-alpha-D-glucosamine</name>
        <dbReference type="ChEBI" id="CHEBI:57705"/>
    </ligand>
</feature>
<feature type="binding site" evidence="1">
    <location>
        <position position="341"/>
    </location>
    <ligand>
        <name>UDP-N-acetyl-alpha-D-glucosamine</name>
        <dbReference type="ChEBI" id="CHEBI:57705"/>
    </ligand>
</feature>
<feature type="binding site" evidence="1">
    <location>
        <position position="359"/>
    </location>
    <ligand>
        <name>UDP-N-acetyl-alpha-D-glucosamine</name>
        <dbReference type="ChEBI" id="CHEBI:57705"/>
    </ligand>
</feature>
<feature type="binding site" evidence="1">
    <location>
        <position position="374"/>
    </location>
    <ligand>
        <name>UDP-N-acetyl-alpha-D-glucosamine</name>
        <dbReference type="ChEBI" id="CHEBI:57705"/>
    </ligand>
</feature>
<feature type="binding site" evidence="1">
    <location>
        <position position="385"/>
    </location>
    <ligand>
        <name>UDP-N-acetyl-alpha-D-glucosamine</name>
        <dbReference type="ChEBI" id="CHEBI:57705"/>
    </ligand>
</feature>
<feature type="binding site" evidence="1">
    <location>
        <position position="388"/>
    </location>
    <ligand>
        <name>acetyl-CoA</name>
        <dbReference type="ChEBI" id="CHEBI:57288"/>
    </ligand>
</feature>
<feature type="binding site" evidence="1">
    <location>
        <begin position="394"/>
        <end position="395"/>
    </location>
    <ligand>
        <name>acetyl-CoA</name>
        <dbReference type="ChEBI" id="CHEBI:57288"/>
    </ligand>
</feature>
<feature type="binding site" evidence="1">
    <location>
        <position position="413"/>
    </location>
    <ligand>
        <name>acetyl-CoA</name>
        <dbReference type="ChEBI" id="CHEBI:57288"/>
    </ligand>
</feature>
<feature type="binding site" evidence="1">
    <location>
        <position position="431"/>
    </location>
    <ligand>
        <name>acetyl-CoA</name>
        <dbReference type="ChEBI" id="CHEBI:57288"/>
    </ligand>
</feature>
<feature type="binding site" evidence="1">
    <location>
        <position position="448"/>
    </location>
    <ligand>
        <name>acetyl-CoA</name>
        <dbReference type="ChEBI" id="CHEBI:57288"/>
    </ligand>
</feature>
<organism>
    <name type="scientific">Streptomyces avermitilis (strain ATCC 31267 / DSM 46492 / JCM 5070 / NBRC 14893 / NCIMB 12804 / NRRL 8165 / MA-4680)</name>
    <dbReference type="NCBI Taxonomy" id="227882"/>
    <lineage>
        <taxon>Bacteria</taxon>
        <taxon>Bacillati</taxon>
        <taxon>Actinomycetota</taxon>
        <taxon>Actinomycetes</taxon>
        <taxon>Kitasatosporales</taxon>
        <taxon>Streptomycetaceae</taxon>
        <taxon>Streptomyces</taxon>
    </lineage>
</organism>
<sequence>MSAIRPAAVVVLAAGEGTRMKSATPKVLHDICGRSLVGHVLAAARELEPENLVVVVGHAREQVTAHLAEIDPAVRTAVQAEQNGTGHAVRMGLEELGGVVDGTVVVVCGDTPLLSGETLRQLAATHTADGNAVTVLTAEVPDATGYGRIVRDGASGAVTAIVEHKDASESQRAVREINSGVFAFDGRLLADALGKVRTDNSQGEEYLTDVLGILREAGHRVGASVAADHREIAGINNRVQLAEARRILNDRLLTRAMLAGVTVVDPATTWIDVTVTFGQDAIVHPGTQLQGTTQLGEGAEVGPNSRLKDTRVGAGARIDNTVAERADVGAQASVGPFAYLRPGTRLGAKAKVGTYVETKNASIGEGTKVPHLSYVGDATIGEYSNIGAASVFVNYDGQDKHHTTVGSHCRTGSDNMFVAPVTVGDGAYTAAGSVITKDVPPGSLAVARGQQRNIEGWVARKRPGSAAAKAAEVASRKPEGED</sequence>
<dbReference type="EC" id="2.7.7.23" evidence="1"/>
<dbReference type="EC" id="2.3.1.157" evidence="1"/>
<dbReference type="EMBL" id="BA000030">
    <property type="protein sequence ID" value="BAC71273.1"/>
    <property type="molecule type" value="Genomic_DNA"/>
</dbReference>
<dbReference type="SMR" id="Q82HE8"/>
<dbReference type="KEGG" id="sma:SAVERM_3561"/>
<dbReference type="eggNOG" id="COG1207">
    <property type="taxonomic scope" value="Bacteria"/>
</dbReference>
<dbReference type="HOGENOM" id="CLU_029499_15_2_11"/>
<dbReference type="OrthoDB" id="9775031at2"/>
<dbReference type="UniPathway" id="UPA00113">
    <property type="reaction ID" value="UER00532"/>
</dbReference>
<dbReference type="UniPathway" id="UPA00113">
    <property type="reaction ID" value="UER00533"/>
</dbReference>
<dbReference type="UniPathway" id="UPA00973"/>
<dbReference type="Proteomes" id="UP000000428">
    <property type="component" value="Chromosome"/>
</dbReference>
<dbReference type="GO" id="GO:0005737">
    <property type="term" value="C:cytoplasm"/>
    <property type="evidence" value="ECO:0007669"/>
    <property type="project" value="UniProtKB-SubCell"/>
</dbReference>
<dbReference type="GO" id="GO:0016020">
    <property type="term" value="C:membrane"/>
    <property type="evidence" value="ECO:0007669"/>
    <property type="project" value="GOC"/>
</dbReference>
<dbReference type="GO" id="GO:0019134">
    <property type="term" value="F:glucosamine-1-phosphate N-acetyltransferase activity"/>
    <property type="evidence" value="ECO:0007669"/>
    <property type="project" value="UniProtKB-UniRule"/>
</dbReference>
<dbReference type="GO" id="GO:0000287">
    <property type="term" value="F:magnesium ion binding"/>
    <property type="evidence" value="ECO:0007669"/>
    <property type="project" value="UniProtKB-UniRule"/>
</dbReference>
<dbReference type="GO" id="GO:0003977">
    <property type="term" value="F:UDP-N-acetylglucosamine diphosphorylase activity"/>
    <property type="evidence" value="ECO:0007669"/>
    <property type="project" value="UniProtKB-UniRule"/>
</dbReference>
<dbReference type="GO" id="GO:0000902">
    <property type="term" value="P:cell morphogenesis"/>
    <property type="evidence" value="ECO:0007669"/>
    <property type="project" value="UniProtKB-UniRule"/>
</dbReference>
<dbReference type="GO" id="GO:0071555">
    <property type="term" value="P:cell wall organization"/>
    <property type="evidence" value="ECO:0007669"/>
    <property type="project" value="UniProtKB-KW"/>
</dbReference>
<dbReference type="GO" id="GO:0009245">
    <property type="term" value="P:lipid A biosynthetic process"/>
    <property type="evidence" value="ECO:0007669"/>
    <property type="project" value="UniProtKB-UniRule"/>
</dbReference>
<dbReference type="GO" id="GO:0009252">
    <property type="term" value="P:peptidoglycan biosynthetic process"/>
    <property type="evidence" value="ECO:0007669"/>
    <property type="project" value="UniProtKB-UniRule"/>
</dbReference>
<dbReference type="GO" id="GO:0008360">
    <property type="term" value="P:regulation of cell shape"/>
    <property type="evidence" value="ECO:0007669"/>
    <property type="project" value="UniProtKB-KW"/>
</dbReference>
<dbReference type="GO" id="GO:0006048">
    <property type="term" value="P:UDP-N-acetylglucosamine biosynthetic process"/>
    <property type="evidence" value="ECO:0007669"/>
    <property type="project" value="UniProtKB-UniPathway"/>
</dbReference>
<dbReference type="CDD" id="cd02540">
    <property type="entry name" value="GT2_GlmU_N_bac"/>
    <property type="match status" value="1"/>
</dbReference>
<dbReference type="CDD" id="cd03353">
    <property type="entry name" value="LbH_GlmU_C"/>
    <property type="match status" value="1"/>
</dbReference>
<dbReference type="Gene3D" id="2.160.10.10">
    <property type="entry name" value="Hexapeptide repeat proteins"/>
    <property type="match status" value="1"/>
</dbReference>
<dbReference type="Gene3D" id="3.90.550.10">
    <property type="entry name" value="Spore Coat Polysaccharide Biosynthesis Protein SpsA, Chain A"/>
    <property type="match status" value="1"/>
</dbReference>
<dbReference type="HAMAP" id="MF_01631">
    <property type="entry name" value="GlmU"/>
    <property type="match status" value="1"/>
</dbReference>
<dbReference type="InterPro" id="IPR005882">
    <property type="entry name" value="Bifunctional_GlmU"/>
</dbReference>
<dbReference type="InterPro" id="IPR050065">
    <property type="entry name" value="GlmU-like"/>
</dbReference>
<dbReference type="InterPro" id="IPR038009">
    <property type="entry name" value="GlmU_C_LbH"/>
</dbReference>
<dbReference type="InterPro" id="IPR025877">
    <property type="entry name" value="MobA-like_NTP_Trfase"/>
</dbReference>
<dbReference type="InterPro" id="IPR029044">
    <property type="entry name" value="Nucleotide-diphossugar_trans"/>
</dbReference>
<dbReference type="InterPro" id="IPR011004">
    <property type="entry name" value="Trimer_LpxA-like_sf"/>
</dbReference>
<dbReference type="NCBIfam" id="TIGR01173">
    <property type="entry name" value="glmU"/>
    <property type="match status" value="1"/>
</dbReference>
<dbReference type="NCBIfam" id="NF010932">
    <property type="entry name" value="PRK14352.1"/>
    <property type="match status" value="1"/>
</dbReference>
<dbReference type="NCBIfam" id="NF010934">
    <property type="entry name" value="PRK14354.1"/>
    <property type="match status" value="1"/>
</dbReference>
<dbReference type="PANTHER" id="PTHR43584:SF3">
    <property type="entry name" value="BIFUNCTIONAL PROTEIN GLMU"/>
    <property type="match status" value="1"/>
</dbReference>
<dbReference type="PANTHER" id="PTHR43584">
    <property type="entry name" value="NUCLEOTIDYL TRANSFERASE"/>
    <property type="match status" value="1"/>
</dbReference>
<dbReference type="Pfam" id="PF12804">
    <property type="entry name" value="NTP_transf_3"/>
    <property type="match status" value="1"/>
</dbReference>
<dbReference type="SUPFAM" id="SSF53448">
    <property type="entry name" value="Nucleotide-diphospho-sugar transferases"/>
    <property type="match status" value="1"/>
</dbReference>
<dbReference type="SUPFAM" id="SSF51161">
    <property type="entry name" value="Trimeric LpxA-like enzymes"/>
    <property type="match status" value="1"/>
</dbReference>